<feature type="chain" id="PRO_0000308256" description="Lipoxygenase homology domain-containing protein 1">
    <location>
        <begin position="1"/>
        <end position="2067"/>
    </location>
</feature>
<feature type="domain" description="PLAT 1" evidence="2">
    <location>
        <begin position="43"/>
        <end position="160"/>
    </location>
</feature>
<feature type="domain" description="PLAT 2" evidence="2">
    <location>
        <begin position="172"/>
        <end position="287"/>
    </location>
</feature>
<feature type="domain" description="PLAT 3" evidence="2">
    <location>
        <begin position="296"/>
        <end position="412"/>
    </location>
</feature>
<feature type="domain" description="PLAT 4" evidence="2">
    <location>
        <begin position="425"/>
        <end position="540"/>
    </location>
</feature>
<feature type="domain" description="PLAT 5" evidence="2">
    <location>
        <begin position="553"/>
        <end position="673"/>
    </location>
</feature>
<feature type="domain" description="PLAT 6" evidence="2">
    <location>
        <begin position="684"/>
        <end position="803"/>
    </location>
</feature>
<feature type="domain" description="PLAT 7" evidence="2">
    <location>
        <begin position="814"/>
        <end position="934"/>
    </location>
</feature>
<feature type="domain" description="PLAT 8" evidence="2">
    <location>
        <begin position="969"/>
        <end position="1087"/>
    </location>
</feature>
<feature type="domain" description="PLAT 9" evidence="2">
    <location>
        <begin position="1100"/>
        <end position="1225"/>
    </location>
</feature>
<feature type="domain" description="PLAT 10" evidence="2">
    <location>
        <begin position="1254"/>
        <end position="1372"/>
    </location>
</feature>
<feature type="domain" description="PLAT 11" evidence="2">
    <location>
        <begin position="1421"/>
        <end position="1539"/>
    </location>
</feature>
<feature type="domain" description="PLAT 12" evidence="2">
    <location>
        <begin position="1552"/>
        <end position="1667"/>
    </location>
</feature>
<feature type="domain" description="PLAT 13" evidence="2">
    <location>
        <begin position="1679"/>
        <end position="1797"/>
    </location>
</feature>
<feature type="domain" description="PLAT 14" evidence="2">
    <location>
        <begin position="1810"/>
        <end position="1931"/>
    </location>
</feature>
<feature type="domain" description="PLAT 15" evidence="2">
    <location>
        <begin position="1948"/>
        <end position="2064"/>
    </location>
</feature>
<feature type="splice variant" id="VSP_028947" description="In isoform 5 and isoform 4." evidence="4">
    <location>
        <begin position="1"/>
        <end position="1555"/>
    </location>
</feature>
<feature type="splice variant" id="VSP_059671" description="In isoform 3." evidence="5">
    <location>
        <begin position="1"/>
        <end position="905"/>
    </location>
</feature>
<feature type="splice variant" id="VSP_059672" description="In isoform 3." evidence="5">
    <original>GELRKVRLEHDS</original>
    <variation>VVTRLGLAAECG</variation>
    <location>
        <begin position="2008"/>
        <end position="2019"/>
    </location>
</feature>
<feature type="splice variant" id="VSP_059673" description="In isoform 4." evidence="5">
    <location>
        <begin position="2013"/>
        <end position="2067"/>
    </location>
</feature>
<feature type="splice variant" id="VSP_059674" description="In isoform 3." evidence="5">
    <location>
        <begin position="2020"/>
        <end position="2067"/>
    </location>
</feature>
<feature type="sequence variant" id="VAR_056923" description="In dbSNP:rs10163657.">
    <original>V</original>
    <variation>I</variation>
    <location>
        <position position="363"/>
    </location>
</feature>
<feature type="sequence variant" id="VAR_056924" description="In dbSNP:rs34589386.">
    <original>G</original>
    <variation>C</variation>
    <location>
        <position position="626"/>
    </location>
</feature>
<feature type="sequence variant" id="VAR_056925" description="In dbSNP:rs35088381.">
    <original>G</original>
    <variation>C</variation>
    <location>
        <position position="632"/>
    </location>
</feature>
<feature type="sequence variant" id="VAR_056926" description="In dbSNP:rs16978578.">
    <original>D</original>
    <variation>G</variation>
    <location>
        <position position="676"/>
    </location>
</feature>
<feature type="sequence variant" id="VAR_056927" description="In dbSNP:rs36086089.">
    <original>V</original>
    <variation>M</variation>
    <location>
        <position position="825"/>
    </location>
</feature>
<feature type="sequence variant" id="VAR_056928" description="In dbSNP:rs7244681.">
    <original>T</original>
    <variation>M</variation>
    <location>
        <position position="1177"/>
    </location>
</feature>
<feature type="sequence variant" id="VAR_056929" description="In dbSNP:rs12606417.">
    <original>E</original>
    <variation>G</variation>
    <location>
        <position position="1417"/>
    </location>
</feature>
<feature type="sequence conflict" description="In Ref. 4; AAH41860." evidence="6" ref="4">
    <original>R</original>
    <variation>G</variation>
    <location>
        <position position="949"/>
    </location>
</feature>
<feature type="sequence conflict" description="In Ref. 4; AAH41860." evidence="6" ref="4">
    <original>H</original>
    <variation>N</variation>
    <location>
        <position position="1040"/>
    </location>
</feature>
<feature type="sequence conflict" description="In Ref. 4; AAH41860." evidence="6" ref="4">
    <original>I</original>
    <variation>V</variation>
    <location>
        <position position="1221"/>
    </location>
</feature>
<feature type="sequence conflict" description="In Ref. 4; AAH47720." evidence="6" ref="4">
    <original>A</original>
    <variation>V</variation>
    <location>
        <position position="1892"/>
    </location>
</feature>
<feature type="sequence conflict" description="In Ref. 1; BAB71390." evidence="6" ref="1">
    <original>F</original>
    <variation>L</variation>
    <location>
        <position position="1910"/>
    </location>
</feature>
<sequence>MMPQKKRRRKKDIDFLALYEAELLNYASEDDEGELEHEYYKARVYEVVTATGDVRGAGTDANVFITLFGENGLSPKLQLTSKSKSAFEKGNVDVFRVRTNNVGLIYKVRIEHDNTGLNASWYLDHVIVTDMKRPHLRYYFNCNNWLSKVEGDRQWCRDLLASFNPMDMPRGNKYEVKVYTGDVIGAGTDADVFINIFGEYGDTGERRLENEKDNFEKGAEDRFILDAPDLGQLMKINVGHNNKGGSAGWFLSQIVIEDIGNKRKYDFPLNRWLALDEDDGKIQRDILVGGAETTAITYIVTVFTGDVRGAGTKSKIYLVMYGARGNKNSGKIFLEGGVFDRGRTDIFHIELAVLLSPLSRVSVGHGNVGVNRGWFCEKVVILCPFTGIQQTFPCSNWLDEKKADGLIERQLYEMVSLRKKRLKKFPWSLWVWTTDLKKAGTNSPIFIQIYGQKGRTDEILLNPNNKWFKPGIIEKFRIELPDLGRFYKIRVWHDKRSSGSGWHLERMTLMNTLNKDKYNFNCNRWLDANEDDNEIVREMTAEGPTVRRIMGMARYHVTVCTGELEGAGTDANVYLCLFGDVGDTGERLLYNCRNNTDLFEKGNADEFTIESVTMRNVRRVRIRHDGKGSGSGWYLDRVLVREEGQPESDNVEFPCLRWLDKDKDDGQLVRELLPSDSSATLKNFRYHISLKTGDVSGASTDSRVYIKLYGDKSDTIKQVLLVSDNNLKDYFERGRVDEFTLETLNIGNINRLVIGHDSTGMHASWFLGSVQIRVPRQGKQYTFPANRWLDKNQADGRLEVELYPSEVVEIQKLVHYEVEIWTGDVGGAGTSARVYMQIYGEKGKTEVLFLSSRSKVFERASKDTFQTDTFTIYAIDLGALTKIRIRHDNTGNRAGWFLDRIDITDMNNEITYYFPCQRWLAVEEDDGQLSRELLPVDESYVLPQSEEGRGGGDNNPLDNLALEQKDKSTTFSVTIKTGVKKNAGTDANVFITLFGTQDDTGMTLLKSSKTNSDKFERDSIEIFTVETLDLGDLWKVRLGHDNTGKAPGWFVDWVEVDAPSLGKCMTFPCGRWLAKNEDDGSIIRDLFHAELQTRLYTPFVPYEITLYTSDVFAAGTDANIFIIIYGCDAVCTQQKYLCTNKREQKQFFERKSASRFIVELEDVGEIIEKIRIGHNNTGMNPGWHCSHVDIRRLLPDKDGAETLTFPCDRWLATSEDDKKTIRELVPYDIFTEKYMKDGSLRQVYKEVEEPLDIVLYSVQIFTGNIPGAGTDAKVYITIYGDLGDTGERYLGKSENRTNKFERGTADTFIIEAADLGVIYKIKLRHDNSKWCADWYVEKVEIWNDTNEDEFLFLCGRWLSLKKEDGRLERLFYEKEYTGDRSSNCSSPADFWEIALSSKMADVDISTVTGPMADYVQEGPIIPYYVSVTTGKHKDAATDSRAFIFLIGEDDERSKRIWLDYPRGKRGFSRGSVEEFYVAGLDVGIIKKIELGHDGASPESCWLVEELCLAVPTQGTKYMLNCNCWLAKDRGDGITSRVFDLLDAMVVNIGVKVLYEMTVWTGDVVGGGTDSNIFMTLYGINGSTEEMQLDKKKARFEREQNDTFIMEILDIAPFTKMRIRIDGLGSRPEWFLERILLKNMNTGDLTMFYYGDWLSQRKGKKTLVCEMCAVIDEEEMMEWTSYTVAVKTSDILGAGTDANVFIIIFGENGDSGTLALKQSANWNKFERNNTDTFNFPDMLSLGHLCKLRVWHDNKGIFPGWHLSYVDVKDNSRDETFHFQCDCWLSKSEGDGQTVRDFACANNKICDELEETTYEIVIETGNGGETRENVWLILEGRKNRSKEFLMENSSRQRAFRKGTTDTFEFDSIYLGDIASLCVGHLAREDRFIPKRELAWHVKTITITEMEYGNVYFFNCDCLIPLKRKRKYFKVFEVTKTTESFASKVQSLVPVKYEVIVTTGYEPGAGTDANVFVTIFGANGDTGKRELKQKMRNLFERGSTDRFFLETLELGELRKVRLEHDSSGYCSGWLVEKVEVTNTSTGVATIFNCGRWLDKKRGDGLTWRDLFPSV</sequence>
<protein>
    <recommendedName>
        <fullName>Lipoxygenase homology domain-containing protein 1</fullName>
    </recommendedName>
</protein>
<comment type="function">
    <text evidence="1 3">Involved in hearing. Required for normal function of hair cells in the inner ear (By similarity).</text>
</comment>
<comment type="subcellular location">
    <subcellularLocation>
        <location evidence="1">Cell projection</location>
        <location evidence="1">Stereocilium</location>
    </subcellularLocation>
</comment>
<comment type="alternative products">
    <event type="alternative splicing"/>
    <isoform>
        <id>Q8IVV2-1</id>
        <name>1</name>
        <sequence type="displayed"/>
    </isoform>
    <isoform>
        <id>Q8IVV2-3</id>
        <name>3</name>
        <sequence type="described" ref="VSP_059671 VSP_059672 VSP_059674"/>
    </isoform>
    <isoform>
        <id>Q8IVV2-4</id>
        <name>4</name>
        <sequence type="described" ref="VSP_028947 VSP_059673"/>
    </isoform>
    <isoform>
        <id>Q8IVV2-5</id>
        <name>5</name>
        <sequence type="described" ref="VSP_028947"/>
    </isoform>
</comment>
<comment type="disease" evidence="3">
    <disease id="DI-02528">
        <name>Deafness, autosomal recessive, 77</name>
        <acronym>DFNB77</acronym>
        <description>A form of non-syndromic deafness characterized by preserved low-frequency hearing, and a trend toward mild to moderate mid-frequency and high-frequency hearing loss during childhood and adolescence. Hearing loss progresses to become moderate to severe at mid and high frequencies during adulthood.</description>
        <dbReference type="MIM" id="613079"/>
    </disease>
    <text>The disease is caused by variants affecting the gene represented in this entry.</text>
</comment>
<keyword id="KW-0025">Alternative splicing</keyword>
<keyword id="KW-0966">Cell projection</keyword>
<keyword id="KW-0209">Deafness</keyword>
<keyword id="KW-1009">Hearing</keyword>
<keyword id="KW-1010">Non-syndromic deafness</keyword>
<keyword id="KW-1185">Reference proteome</keyword>
<keyword id="KW-0677">Repeat</keyword>
<reference key="1">
    <citation type="journal article" date="2004" name="Nat. Genet.">
        <title>Complete sequencing and characterization of 21,243 full-length human cDNAs.</title>
        <authorList>
            <person name="Ota T."/>
            <person name="Suzuki Y."/>
            <person name="Nishikawa T."/>
            <person name="Otsuki T."/>
            <person name="Sugiyama T."/>
            <person name="Irie R."/>
            <person name="Wakamatsu A."/>
            <person name="Hayashi K."/>
            <person name="Sato H."/>
            <person name="Nagai K."/>
            <person name="Kimura K."/>
            <person name="Makita H."/>
            <person name="Sekine M."/>
            <person name="Obayashi M."/>
            <person name="Nishi T."/>
            <person name="Shibahara T."/>
            <person name="Tanaka T."/>
            <person name="Ishii S."/>
            <person name="Yamamoto J."/>
            <person name="Saito K."/>
            <person name="Kawai Y."/>
            <person name="Isono Y."/>
            <person name="Nakamura Y."/>
            <person name="Nagahari K."/>
            <person name="Murakami K."/>
            <person name="Yasuda T."/>
            <person name="Iwayanagi T."/>
            <person name="Wagatsuma M."/>
            <person name="Shiratori A."/>
            <person name="Sudo H."/>
            <person name="Hosoiri T."/>
            <person name="Kaku Y."/>
            <person name="Kodaira H."/>
            <person name="Kondo H."/>
            <person name="Sugawara M."/>
            <person name="Takahashi M."/>
            <person name="Kanda K."/>
            <person name="Yokoi T."/>
            <person name="Furuya T."/>
            <person name="Kikkawa E."/>
            <person name="Omura Y."/>
            <person name="Abe K."/>
            <person name="Kamihara K."/>
            <person name="Katsuta N."/>
            <person name="Sato K."/>
            <person name="Tanikawa M."/>
            <person name="Yamazaki M."/>
            <person name="Ninomiya K."/>
            <person name="Ishibashi T."/>
            <person name="Yamashita H."/>
            <person name="Murakawa K."/>
            <person name="Fujimori K."/>
            <person name="Tanai H."/>
            <person name="Kimata M."/>
            <person name="Watanabe M."/>
            <person name="Hiraoka S."/>
            <person name="Chiba Y."/>
            <person name="Ishida S."/>
            <person name="Ono Y."/>
            <person name="Takiguchi S."/>
            <person name="Watanabe S."/>
            <person name="Yosida M."/>
            <person name="Hotuta T."/>
            <person name="Kusano J."/>
            <person name="Kanehori K."/>
            <person name="Takahashi-Fujii A."/>
            <person name="Hara H."/>
            <person name="Tanase T.-O."/>
            <person name="Nomura Y."/>
            <person name="Togiya S."/>
            <person name="Komai F."/>
            <person name="Hara R."/>
            <person name="Takeuchi K."/>
            <person name="Arita M."/>
            <person name="Imose N."/>
            <person name="Musashino K."/>
            <person name="Yuuki H."/>
            <person name="Oshima A."/>
            <person name="Sasaki N."/>
            <person name="Aotsuka S."/>
            <person name="Yoshikawa Y."/>
            <person name="Matsunawa H."/>
            <person name="Ichihara T."/>
            <person name="Shiohata N."/>
            <person name="Sano S."/>
            <person name="Moriya S."/>
            <person name="Momiyama H."/>
            <person name="Satoh N."/>
            <person name="Takami S."/>
            <person name="Terashima Y."/>
            <person name="Suzuki O."/>
            <person name="Nakagawa S."/>
            <person name="Senoh A."/>
            <person name="Mizoguchi H."/>
            <person name="Goto Y."/>
            <person name="Shimizu F."/>
            <person name="Wakebe H."/>
            <person name="Hishigaki H."/>
            <person name="Watanabe T."/>
            <person name="Sugiyama A."/>
            <person name="Takemoto M."/>
            <person name="Kawakami B."/>
            <person name="Yamazaki M."/>
            <person name="Watanabe K."/>
            <person name="Kumagai A."/>
            <person name="Itakura S."/>
            <person name="Fukuzumi Y."/>
            <person name="Fujimori Y."/>
            <person name="Komiyama M."/>
            <person name="Tashiro H."/>
            <person name="Tanigami A."/>
            <person name="Fujiwara T."/>
            <person name="Ono T."/>
            <person name="Yamada K."/>
            <person name="Fujii Y."/>
            <person name="Ozaki K."/>
            <person name="Hirao M."/>
            <person name="Ohmori Y."/>
            <person name="Kawabata A."/>
            <person name="Hikiji T."/>
            <person name="Kobatake N."/>
            <person name="Inagaki H."/>
            <person name="Ikema Y."/>
            <person name="Okamoto S."/>
            <person name="Okitani R."/>
            <person name="Kawakami T."/>
            <person name="Noguchi S."/>
            <person name="Itoh T."/>
            <person name="Shigeta K."/>
            <person name="Senba T."/>
            <person name="Matsumura K."/>
            <person name="Nakajima Y."/>
            <person name="Mizuno T."/>
            <person name="Morinaga M."/>
            <person name="Sasaki M."/>
            <person name="Togashi T."/>
            <person name="Oyama M."/>
            <person name="Hata H."/>
            <person name="Watanabe M."/>
            <person name="Komatsu T."/>
            <person name="Mizushima-Sugano J."/>
            <person name="Satoh T."/>
            <person name="Shirai Y."/>
            <person name="Takahashi Y."/>
            <person name="Nakagawa K."/>
            <person name="Okumura K."/>
            <person name="Nagase T."/>
            <person name="Nomura N."/>
            <person name="Kikuchi H."/>
            <person name="Masuho Y."/>
            <person name="Yamashita R."/>
            <person name="Nakai K."/>
            <person name="Yada T."/>
            <person name="Nakamura Y."/>
            <person name="Ohara O."/>
            <person name="Isogai T."/>
            <person name="Sugano S."/>
        </authorList>
    </citation>
    <scope>NUCLEOTIDE SEQUENCE [LARGE SCALE MRNA] (ISOFORM 5)</scope>
    <source>
        <tissue>Testis</tissue>
    </source>
</reference>
<reference key="2">
    <citation type="journal article" date="2005" name="Nature">
        <title>DNA sequence and analysis of human chromosome 18.</title>
        <authorList>
            <person name="Nusbaum C."/>
            <person name="Zody M.C."/>
            <person name="Borowsky M.L."/>
            <person name="Kamal M."/>
            <person name="Kodira C.D."/>
            <person name="Taylor T.D."/>
            <person name="Whittaker C.A."/>
            <person name="Chang J.L."/>
            <person name="Cuomo C.A."/>
            <person name="Dewar K."/>
            <person name="FitzGerald M.G."/>
            <person name="Yang X."/>
            <person name="Abouelleil A."/>
            <person name="Allen N.R."/>
            <person name="Anderson S."/>
            <person name="Bloom T."/>
            <person name="Bugalter B."/>
            <person name="Butler J."/>
            <person name="Cook A."/>
            <person name="DeCaprio D."/>
            <person name="Engels R."/>
            <person name="Garber M."/>
            <person name="Gnirke A."/>
            <person name="Hafez N."/>
            <person name="Hall J.L."/>
            <person name="Norman C.H."/>
            <person name="Itoh T."/>
            <person name="Jaffe D.B."/>
            <person name="Kuroki Y."/>
            <person name="Lehoczky J."/>
            <person name="Lui A."/>
            <person name="Macdonald P."/>
            <person name="Mauceli E."/>
            <person name="Mikkelsen T.S."/>
            <person name="Naylor J.W."/>
            <person name="Nicol R."/>
            <person name="Nguyen C."/>
            <person name="Noguchi H."/>
            <person name="O'Leary S.B."/>
            <person name="Piqani B."/>
            <person name="Smith C.L."/>
            <person name="Talamas J.A."/>
            <person name="Topham K."/>
            <person name="Totoki Y."/>
            <person name="Toyoda A."/>
            <person name="Wain H.M."/>
            <person name="Young S.K."/>
            <person name="Zeng Q."/>
            <person name="Zimmer A.R."/>
            <person name="Fujiyama A."/>
            <person name="Hattori M."/>
            <person name="Birren B.W."/>
            <person name="Sakaki Y."/>
            <person name="Lander E.S."/>
        </authorList>
    </citation>
    <scope>NUCLEOTIDE SEQUENCE [LARGE SCALE GENOMIC DNA]</scope>
</reference>
<reference key="3">
    <citation type="submission" date="2005-07" db="EMBL/GenBank/DDBJ databases">
        <authorList>
            <person name="Mural R.J."/>
            <person name="Istrail S."/>
            <person name="Sutton G.G."/>
            <person name="Florea L."/>
            <person name="Halpern A.L."/>
            <person name="Mobarry C.M."/>
            <person name="Lippert R."/>
            <person name="Walenz B."/>
            <person name="Shatkay H."/>
            <person name="Dew I."/>
            <person name="Miller J.R."/>
            <person name="Flanigan M.J."/>
            <person name="Edwards N.J."/>
            <person name="Bolanos R."/>
            <person name="Fasulo D."/>
            <person name="Halldorsson B.V."/>
            <person name="Hannenhalli S."/>
            <person name="Turner R."/>
            <person name="Yooseph S."/>
            <person name="Lu F."/>
            <person name="Nusskern D.R."/>
            <person name="Shue B.C."/>
            <person name="Zheng X.H."/>
            <person name="Zhong F."/>
            <person name="Delcher A.L."/>
            <person name="Huson D.H."/>
            <person name="Kravitz S.A."/>
            <person name="Mouchard L."/>
            <person name="Reinert K."/>
            <person name="Remington K.A."/>
            <person name="Clark A.G."/>
            <person name="Waterman M.S."/>
            <person name="Eichler E.E."/>
            <person name="Adams M.D."/>
            <person name="Hunkapiller M.W."/>
            <person name="Myers E.W."/>
            <person name="Venter J.C."/>
        </authorList>
    </citation>
    <scope>NUCLEOTIDE SEQUENCE [LARGE SCALE GENOMIC DNA]</scope>
</reference>
<reference key="4">
    <citation type="journal article" date="2004" name="Genome Res.">
        <title>The status, quality, and expansion of the NIH full-length cDNA project: the Mammalian Gene Collection (MGC).</title>
        <authorList>
            <consortium name="The MGC Project Team"/>
        </authorList>
    </citation>
    <scope>NUCLEOTIDE SEQUENCE [LARGE SCALE MRNA] (ISOFORMS 3 AND 4)</scope>
    <source>
        <tissue>Brain</tissue>
        <tissue>Testis</tissue>
    </source>
</reference>
<reference key="5">
    <citation type="journal article" date="2009" name="Am. J. Hum. Genet.">
        <title>Mutations in LOXHD1, an evolutionarily conserved stereociliary protein, disrupt hair cell function in mice and cause progressive hearing loss in humans.</title>
        <authorList>
            <person name="Grillet N."/>
            <person name="Schwander M."/>
            <person name="Hildebrand M.S."/>
            <person name="Sczaniecka A."/>
            <person name="Kolatkar A."/>
            <person name="Velasco J."/>
            <person name="Webster J.A."/>
            <person name="Kahrizi K."/>
            <person name="Najmabadi H."/>
            <person name="Kimberling W.J."/>
            <person name="Stephan D."/>
            <person name="Bahlo M."/>
            <person name="Wiltshire T."/>
            <person name="Tarantino L.M."/>
            <person name="Kuhn P."/>
            <person name="Smith R.J.H."/>
            <person name="Mueller U."/>
        </authorList>
    </citation>
    <scope>INVOLVEMENT IN DFNB77</scope>
    <scope>FUNCTION</scope>
</reference>
<organism>
    <name type="scientific">Homo sapiens</name>
    <name type="common">Human</name>
    <dbReference type="NCBI Taxonomy" id="9606"/>
    <lineage>
        <taxon>Eukaryota</taxon>
        <taxon>Metazoa</taxon>
        <taxon>Chordata</taxon>
        <taxon>Craniata</taxon>
        <taxon>Vertebrata</taxon>
        <taxon>Euteleostomi</taxon>
        <taxon>Mammalia</taxon>
        <taxon>Eutheria</taxon>
        <taxon>Euarchontoglires</taxon>
        <taxon>Primates</taxon>
        <taxon>Haplorrhini</taxon>
        <taxon>Catarrhini</taxon>
        <taxon>Hominidae</taxon>
        <taxon>Homo</taxon>
    </lineage>
</organism>
<proteinExistence type="evidence at transcript level"/>
<dbReference type="EMBL" id="AK057232">
    <property type="protein sequence ID" value="BAB71390.1"/>
    <property type="molecule type" value="mRNA"/>
</dbReference>
<dbReference type="EMBL" id="AK127869">
    <property type="status" value="NOT_ANNOTATED_CDS"/>
    <property type="molecule type" value="mRNA"/>
</dbReference>
<dbReference type="EMBL" id="AC018931">
    <property type="status" value="NOT_ANNOTATED_CDS"/>
    <property type="molecule type" value="Genomic_DNA"/>
</dbReference>
<dbReference type="EMBL" id="AC064800">
    <property type="status" value="NOT_ANNOTATED_CDS"/>
    <property type="molecule type" value="Genomic_DNA"/>
</dbReference>
<dbReference type="EMBL" id="AC091139">
    <property type="status" value="NOT_ANNOTATED_CDS"/>
    <property type="molecule type" value="Genomic_DNA"/>
</dbReference>
<dbReference type="EMBL" id="KC877690">
    <property type="status" value="NOT_ANNOTATED_CDS"/>
    <property type="molecule type" value="Genomic_DNA"/>
</dbReference>
<dbReference type="EMBL" id="CH471088">
    <property type="protein sequence ID" value="EAX01479.1"/>
    <property type="molecule type" value="Genomic_DNA"/>
</dbReference>
<dbReference type="EMBL" id="CH471088">
    <property type="protein sequence ID" value="EAX01480.1"/>
    <property type="molecule type" value="Genomic_DNA"/>
</dbReference>
<dbReference type="EMBL" id="BC041860">
    <property type="protein sequence ID" value="AAH41860.1"/>
    <property type="molecule type" value="mRNA"/>
</dbReference>
<dbReference type="EMBL" id="BC047720">
    <property type="protein sequence ID" value="AAH47720.1"/>
    <property type="molecule type" value="mRNA"/>
</dbReference>
<dbReference type="CCDS" id="CCDS45861.1">
    <molecule id="Q8IVV2-3"/>
</dbReference>
<dbReference type="CCDS" id="CCDS45862.1">
    <molecule id="Q8IVV2-5"/>
</dbReference>
<dbReference type="CCDS" id="CCDS54184.1">
    <molecule id="Q8IVV2-4"/>
</dbReference>
<dbReference type="RefSeq" id="NP_001138944.1">
    <molecule id="Q8IVV2-3"/>
    <property type="nucleotide sequence ID" value="NM_001145472.3"/>
</dbReference>
<dbReference type="RefSeq" id="NP_001138945.1">
    <molecule id="Q8IVV2-5"/>
    <property type="nucleotide sequence ID" value="NM_001145473.3"/>
</dbReference>
<dbReference type="RefSeq" id="NP_001166600.1">
    <molecule id="Q8IVV2-4"/>
    <property type="nucleotide sequence ID" value="NM_001173129.2"/>
</dbReference>
<dbReference type="RefSeq" id="NP_653213.6">
    <property type="nucleotide sequence ID" value="NM_144612.6"/>
</dbReference>
<dbReference type="RefSeq" id="XP_011524113.1">
    <molecule id="Q8IVV2-5"/>
    <property type="nucleotide sequence ID" value="XM_011525811.3"/>
</dbReference>
<dbReference type="RefSeq" id="XP_016881037.1">
    <property type="nucleotide sequence ID" value="XM_017025548.1"/>
</dbReference>
<dbReference type="RefSeq" id="XP_054174166.1">
    <molecule id="Q8IVV2-5"/>
    <property type="nucleotide sequence ID" value="XM_054318191.1"/>
</dbReference>
<dbReference type="SMR" id="Q8IVV2"/>
<dbReference type="BioGRID" id="125926">
    <property type="interactions" value="6"/>
</dbReference>
<dbReference type="FunCoup" id="Q8IVV2">
    <property type="interactions" value="7"/>
</dbReference>
<dbReference type="IntAct" id="Q8IVV2">
    <property type="interactions" value="1"/>
</dbReference>
<dbReference type="STRING" id="9606.ENSP00000444586"/>
<dbReference type="CarbonylDB" id="Q8IVV2"/>
<dbReference type="GlyGen" id="Q8IVV2">
    <property type="glycosylation" value="4 sites, 1 O-linked glycan (1 site)"/>
</dbReference>
<dbReference type="iPTMnet" id="Q8IVV2"/>
<dbReference type="PhosphoSitePlus" id="Q8IVV2"/>
<dbReference type="BioMuta" id="LOXHD1"/>
<dbReference type="DMDM" id="294862503"/>
<dbReference type="jPOST" id="Q8IVV2"/>
<dbReference type="MassIVE" id="Q8IVV2"/>
<dbReference type="PaxDb" id="9606-ENSP00000300591"/>
<dbReference type="PeptideAtlas" id="Q8IVV2"/>
<dbReference type="Pumba" id="Q8IVV2"/>
<dbReference type="Antibodypedia" id="49424">
    <property type="antibodies" value="30 antibodies from 7 providers"/>
</dbReference>
<dbReference type="DNASU" id="125336"/>
<dbReference type="Ensembl" id="ENST00000300591.11">
    <molecule id="Q8IVV2-3"/>
    <property type="protein sequence ID" value="ENSP00000300591.6"/>
    <property type="gene ID" value="ENSG00000167210.17"/>
</dbReference>
<dbReference type="Ensembl" id="ENST00000398686.8">
    <molecule id="Q8IVV2-5"/>
    <property type="protein sequence ID" value="ENSP00000381676.4"/>
    <property type="gene ID" value="ENSG00000167210.17"/>
</dbReference>
<dbReference type="Ensembl" id="ENST00000398705.7">
    <molecule id="Q8IVV2-4"/>
    <property type="protein sequence ID" value="ENSP00000381692.2"/>
    <property type="gene ID" value="ENSG00000167210.17"/>
</dbReference>
<dbReference type="Ensembl" id="ENST00000441551.6">
    <molecule id="Q8IVV2-1"/>
    <property type="protein sequence ID" value="ENSP00000387621.2"/>
    <property type="gene ID" value="ENSG00000167210.17"/>
</dbReference>
<dbReference type="GeneID" id="125336"/>
<dbReference type="KEGG" id="hsa:125336"/>
<dbReference type="UCSC" id="uc002lcd.5">
    <molecule id="Q8IVV2-1"/>
    <property type="organism name" value="human"/>
</dbReference>
<dbReference type="AGR" id="HGNC:26521"/>
<dbReference type="CTD" id="125336"/>
<dbReference type="DisGeNET" id="125336"/>
<dbReference type="GeneCards" id="LOXHD1"/>
<dbReference type="GeneReviews" id="LOXHD1"/>
<dbReference type="HGNC" id="HGNC:26521">
    <property type="gene designation" value="LOXHD1"/>
</dbReference>
<dbReference type="HPA" id="ENSG00000167210">
    <property type="expression patterns" value="Group enriched (epididymis, kidney, testis)"/>
</dbReference>
<dbReference type="MalaCards" id="LOXHD1"/>
<dbReference type="MIM" id="613072">
    <property type="type" value="gene"/>
</dbReference>
<dbReference type="MIM" id="613079">
    <property type="type" value="phenotype"/>
</dbReference>
<dbReference type="neXtProt" id="NX_Q8IVV2"/>
<dbReference type="OpenTargets" id="ENSG00000167210"/>
<dbReference type="Orphanet" id="90636">
    <property type="disease" value="Rare autosomal recessive non-syndromic sensorineural deafness type DFNB"/>
</dbReference>
<dbReference type="PharmGKB" id="PA134878065"/>
<dbReference type="VEuPathDB" id="HostDB:ENSG00000167210"/>
<dbReference type="eggNOG" id="KOG3599">
    <property type="taxonomic scope" value="Eukaryota"/>
</dbReference>
<dbReference type="GeneTree" id="ENSGT00390000018830"/>
<dbReference type="HOGENOM" id="CLU_009895_1_0_1"/>
<dbReference type="InParanoid" id="Q8IVV2"/>
<dbReference type="OMA" id="MICEMPA"/>
<dbReference type="OrthoDB" id="5322100at2759"/>
<dbReference type="PAN-GO" id="Q8IVV2">
    <property type="GO annotations" value="2 GO annotations based on evolutionary models"/>
</dbReference>
<dbReference type="PhylomeDB" id="Q8IVV2"/>
<dbReference type="TreeFam" id="TF350466"/>
<dbReference type="PathwayCommons" id="Q8IVV2"/>
<dbReference type="SignaLink" id="Q8IVV2"/>
<dbReference type="BioGRID-ORCS" id="125336">
    <property type="hits" value="6 hits in 1139 CRISPR screens"/>
</dbReference>
<dbReference type="ChiTaRS" id="LOXHD1">
    <property type="organism name" value="human"/>
</dbReference>
<dbReference type="GeneWiki" id="LOXHD1"/>
<dbReference type="GenomeRNAi" id="125336"/>
<dbReference type="Pharos" id="Q8IVV2">
    <property type="development level" value="Tbio"/>
</dbReference>
<dbReference type="PRO" id="PR:Q8IVV2"/>
<dbReference type="Proteomes" id="UP000005640">
    <property type="component" value="Chromosome 18"/>
</dbReference>
<dbReference type="RNAct" id="Q8IVV2">
    <property type="molecule type" value="protein"/>
</dbReference>
<dbReference type="Bgee" id="ENSG00000167210">
    <property type="expression patterns" value="Expressed in left testis and 94 other cell types or tissues"/>
</dbReference>
<dbReference type="ExpressionAtlas" id="Q8IVV2">
    <property type="expression patterns" value="baseline and differential"/>
</dbReference>
<dbReference type="GO" id="GO:0032420">
    <property type="term" value="C:stereocilium"/>
    <property type="evidence" value="ECO:0000250"/>
    <property type="project" value="UniProtKB"/>
</dbReference>
<dbReference type="GO" id="GO:0007605">
    <property type="term" value="P:sensory perception of sound"/>
    <property type="evidence" value="ECO:0000315"/>
    <property type="project" value="UniProtKB"/>
</dbReference>
<dbReference type="CDD" id="cd01756">
    <property type="entry name" value="PLAT_repeat"/>
    <property type="match status" value="13"/>
</dbReference>
<dbReference type="FunFam" id="2.40.180.10:FF:000004">
    <property type="entry name" value="Lipoxygenase homology domain-containing protein 1"/>
    <property type="match status" value="1"/>
</dbReference>
<dbReference type="FunFam" id="2.40.180.10:FF:000009">
    <property type="entry name" value="Lipoxygenase homology domain-containing protein 1"/>
    <property type="match status" value="1"/>
</dbReference>
<dbReference type="FunFam" id="2.40.180.10:FF:000011">
    <property type="entry name" value="Lipoxygenase homology domain-containing protein 1"/>
    <property type="match status" value="1"/>
</dbReference>
<dbReference type="FunFam" id="2.40.180.10:FF:000012">
    <property type="entry name" value="Lipoxygenase homology domain-containing protein 1"/>
    <property type="match status" value="1"/>
</dbReference>
<dbReference type="FunFam" id="2.60.60.20:FF:000004">
    <property type="entry name" value="Lipoxygenase homology domain-containing protein 1"/>
    <property type="match status" value="1"/>
</dbReference>
<dbReference type="FunFam" id="2.60.60.20:FF:000005">
    <property type="entry name" value="Lipoxygenase homology domain-containing protein 1"/>
    <property type="match status" value="1"/>
</dbReference>
<dbReference type="FunFam" id="2.60.60.20:FF:000007">
    <property type="entry name" value="Lipoxygenase homology domain-containing protein 1"/>
    <property type="match status" value="1"/>
</dbReference>
<dbReference type="FunFam" id="2.60.60.20:FF:000009">
    <property type="entry name" value="Lipoxygenase homology domain-containing protein 1"/>
    <property type="match status" value="1"/>
</dbReference>
<dbReference type="FunFam" id="2.60.60.20:FF:000011">
    <property type="entry name" value="Lipoxygenase homology domain-containing protein 1"/>
    <property type="match status" value="1"/>
</dbReference>
<dbReference type="FunFam" id="2.40.180.10:FF:000005">
    <property type="entry name" value="lipoxygenase homology domain-containing protein 1"/>
    <property type="match status" value="1"/>
</dbReference>
<dbReference type="FunFam" id="2.40.180.10:FF:000006">
    <property type="entry name" value="lipoxygenase homology domain-containing protein 1"/>
    <property type="match status" value="1"/>
</dbReference>
<dbReference type="FunFam" id="2.40.180.10:FF:000007">
    <property type="entry name" value="lipoxygenase homology domain-containing protein 1"/>
    <property type="match status" value="1"/>
</dbReference>
<dbReference type="FunFam" id="2.40.180.10:FF:000008">
    <property type="entry name" value="lipoxygenase homology domain-containing protein 1"/>
    <property type="match status" value="1"/>
</dbReference>
<dbReference type="FunFam" id="2.40.180.10:FF:000010">
    <property type="entry name" value="lipoxygenase homology domain-containing protein 1"/>
    <property type="match status" value="1"/>
</dbReference>
<dbReference type="FunFam" id="2.60.60.20:FF:000013">
    <property type="entry name" value="lipoxygenase homology domain-containing protein 1"/>
    <property type="match status" value="1"/>
</dbReference>
<dbReference type="Gene3D" id="2.40.180.10">
    <property type="entry name" value="Catalase core domain"/>
    <property type="match status" value="9"/>
</dbReference>
<dbReference type="Gene3D" id="2.60.60.20">
    <property type="entry name" value="PLAT/LH2 domain"/>
    <property type="match status" value="6"/>
</dbReference>
<dbReference type="InterPro" id="IPR052970">
    <property type="entry name" value="Inner_ear_hair_cell_LOXHD"/>
</dbReference>
<dbReference type="InterPro" id="IPR001024">
    <property type="entry name" value="PLAT/LH2_dom"/>
</dbReference>
<dbReference type="InterPro" id="IPR036392">
    <property type="entry name" value="PLAT/LH2_dom_sf"/>
</dbReference>
<dbReference type="PANTHER" id="PTHR45901:SF3">
    <property type="entry name" value="LIPOXYGENASE HOMOLOGY DOMAIN-CONTAINING PROTEIN 1"/>
    <property type="match status" value="1"/>
</dbReference>
<dbReference type="PANTHER" id="PTHR45901">
    <property type="entry name" value="PROTEIN CBG12474"/>
    <property type="match status" value="1"/>
</dbReference>
<dbReference type="Pfam" id="PF01477">
    <property type="entry name" value="PLAT"/>
    <property type="match status" value="15"/>
</dbReference>
<dbReference type="SMART" id="SM00308">
    <property type="entry name" value="LH2"/>
    <property type="match status" value="12"/>
</dbReference>
<dbReference type="SUPFAM" id="SSF49723">
    <property type="entry name" value="Lipase/lipooxygenase domain (PLAT/LH2 domain)"/>
    <property type="match status" value="15"/>
</dbReference>
<dbReference type="PROSITE" id="PS50095">
    <property type="entry name" value="PLAT"/>
    <property type="match status" value="15"/>
</dbReference>
<evidence type="ECO:0000250" key="1"/>
<evidence type="ECO:0000255" key="2">
    <source>
        <dbReference type="PROSITE-ProRule" id="PRU00152"/>
    </source>
</evidence>
<evidence type="ECO:0000269" key="3">
    <source>
    </source>
</evidence>
<evidence type="ECO:0000303" key="4">
    <source>
    </source>
</evidence>
<evidence type="ECO:0000303" key="5">
    <source>
    </source>
</evidence>
<evidence type="ECO:0000305" key="6"/>
<name>LOXH1_HUMAN</name>
<accession>Q8IVV2</accession>
<accession>B7WNN3</accession>
<accession>B7WNT1</accession>
<accession>B7WPI9</accession>
<accession>H7BZ41</accession>
<accession>Q6ZRY7</accession>
<accession>Q86WW9</accession>
<accession>Q96DL7</accession>
<gene>
    <name type="primary">LOXHD1</name>
</gene>